<keyword id="KW-1185">Reference proteome</keyword>
<accession>Q9PR05</accession>
<dbReference type="EMBL" id="AF222894">
    <property type="protein sequence ID" value="AAF30545.1"/>
    <property type="molecule type" value="Genomic_DNA"/>
</dbReference>
<dbReference type="RefSeq" id="WP_006688826.1">
    <property type="nucleotide sequence ID" value="NC_002162.1"/>
</dbReference>
<dbReference type="STRING" id="273119.UU139"/>
<dbReference type="EnsemblBacteria" id="AAF30545">
    <property type="protein sequence ID" value="AAF30545"/>
    <property type="gene ID" value="UU139"/>
</dbReference>
<dbReference type="GeneID" id="29672155"/>
<dbReference type="KEGG" id="uur:UU139"/>
<dbReference type="HOGENOM" id="CLU_1175028_0_0_14"/>
<dbReference type="OrthoDB" id="9781413at2"/>
<dbReference type="Proteomes" id="UP000000423">
    <property type="component" value="Chromosome"/>
</dbReference>
<organism>
    <name type="scientific">Ureaplasma parvum serovar 3 (strain ATCC 700970)</name>
    <dbReference type="NCBI Taxonomy" id="273119"/>
    <lineage>
        <taxon>Bacteria</taxon>
        <taxon>Bacillati</taxon>
        <taxon>Mycoplasmatota</taxon>
        <taxon>Mycoplasmoidales</taxon>
        <taxon>Mycoplasmoidaceae</taxon>
        <taxon>Ureaplasma</taxon>
    </lineage>
</organism>
<reference key="1">
    <citation type="journal article" date="2000" name="Nature">
        <title>The complete sequence of the mucosal pathogen Ureaplasma urealyticum.</title>
        <authorList>
            <person name="Glass J.I."/>
            <person name="Lefkowitz E.J."/>
            <person name="Glass J.S."/>
            <person name="Heiner C.R."/>
            <person name="Chen E.Y."/>
            <person name="Cassell G.H."/>
        </authorList>
    </citation>
    <scope>NUCLEOTIDE SEQUENCE [LARGE SCALE GENOMIC DNA]</scope>
    <source>
        <strain>ATCC 700970</strain>
    </source>
</reference>
<gene>
    <name type="ordered locus">UU139</name>
</gene>
<proteinExistence type="predicted"/>
<feature type="chain" id="PRO_0000220803" description="Uncharacterized protein UU139">
    <location>
        <begin position="1"/>
        <end position="236"/>
    </location>
</feature>
<sequence length="236" mass="28298">MDEQIFIQLLENNLTNSKSYVTQPIILEFKTDVFLIINQILKQYKKGKIIKNNTNEIILEIDNKLISITNLDINKFHSYQIVNINENKNIYNERNSLILFDLVNYIIEKNQNSIRHINFWTIQMSVVNWIYFITYNFNNSYLIDPNWKKYVFKIKKDESKGVISTNLLHNYGFVDFVVQSKSQNFLKAYRVQDEILKSVLNLGDNLNNEFLEEIMRKYDTYKIIDRDHKYLVINIE</sequence>
<name>Y139_UREPA</name>
<protein>
    <recommendedName>
        <fullName>Uncharacterized protein UU139</fullName>
    </recommendedName>
</protein>